<sequence>MIVLGIESSCDETGLAIYDYSKKKLIADELYSQVKLHKKYGGVVPELASREHIAKLNLLAKKIFKETGLSFEDIDCIAYTAMPGLVGALMVGATFAKTLGLIHNIDTIAVHHLEGHLLSPLLDHNSNIEYPFVALLVSGGHTQLFEVKEFGEYSLLGESIDDAAGEAFDKTTKLLGMGYPGGVEVANLADQATDKSKYILPRPMKNKPNLDFSFSGLKTAVLNTWYDEQDQSLENKANLCYAFQDAAIDVLVSKCAKALQKTKNTRLVISGGVSANKLLRHQLDLLAKNRGYQIFFPPMKYCTDNGAMIALAGAYRYVNGFKDSNLEINVKARSPL</sequence>
<reference key="1">
    <citation type="journal article" date="2009" name="PLoS Pathog.">
        <title>Molecular evolutionary consequences of niche restriction in Francisella tularensis, a facultative intracellular pathogen.</title>
        <authorList>
            <person name="Larsson P."/>
            <person name="Elfsmark D."/>
            <person name="Svensson K."/>
            <person name="Wikstroem P."/>
            <person name="Forsman M."/>
            <person name="Brettin T."/>
            <person name="Keim P."/>
            <person name="Johansson A."/>
        </authorList>
    </citation>
    <scope>NUCLEOTIDE SEQUENCE [LARGE SCALE GENOMIC DNA]</scope>
    <source>
        <strain>FSC147</strain>
    </source>
</reference>
<feature type="chain" id="PRO_1000145984" description="tRNA N6-adenosine threonylcarbamoyltransferase">
    <location>
        <begin position="1"/>
        <end position="336"/>
    </location>
</feature>
<feature type="binding site" evidence="1">
    <location>
        <position position="112"/>
    </location>
    <ligand>
        <name>Fe cation</name>
        <dbReference type="ChEBI" id="CHEBI:24875"/>
    </ligand>
</feature>
<feature type="binding site" evidence="1">
    <location>
        <position position="116"/>
    </location>
    <ligand>
        <name>Fe cation</name>
        <dbReference type="ChEBI" id="CHEBI:24875"/>
    </ligand>
</feature>
<feature type="binding site" evidence="1">
    <location>
        <begin position="136"/>
        <end position="140"/>
    </location>
    <ligand>
        <name>substrate</name>
    </ligand>
</feature>
<feature type="binding site" evidence="1">
    <location>
        <position position="169"/>
    </location>
    <ligand>
        <name>substrate</name>
    </ligand>
</feature>
<feature type="binding site" evidence="1">
    <location>
        <position position="182"/>
    </location>
    <ligand>
        <name>substrate</name>
    </ligand>
</feature>
<feature type="binding site" evidence="1">
    <location>
        <position position="276"/>
    </location>
    <ligand>
        <name>substrate</name>
    </ligand>
</feature>
<feature type="binding site" evidence="1">
    <location>
        <position position="304"/>
    </location>
    <ligand>
        <name>Fe cation</name>
        <dbReference type="ChEBI" id="CHEBI:24875"/>
    </ligand>
</feature>
<gene>
    <name evidence="1" type="primary">tsaD</name>
    <name type="synonym">gcp</name>
    <name type="ordered locus">FTM_0212</name>
</gene>
<organism>
    <name type="scientific">Francisella tularensis subsp. mediasiatica (strain FSC147)</name>
    <dbReference type="NCBI Taxonomy" id="441952"/>
    <lineage>
        <taxon>Bacteria</taxon>
        <taxon>Pseudomonadati</taxon>
        <taxon>Pseudomonadota</taxon>
        <taxon>Gammaproteobacteria</taxon>
        <taxon>Thiotrichales</taxon>
        <taxon>Francisellaceae</taxon>
        <taxon>Francisella</taxon>
    </lineage>
</organism>
<name>TSAD_FRATM</name>
<protein>
    <recommendedName>
        <fullName evidence="1">tRNA N6-adenosine threonylcarbamoyltransferase</fullName>
        <ecNumber evidence="1">2.3.1.234</ecNumber>
    </recommendedName>
    <alternativeName>
        <fullName evidence="1">N6-L-threonylcarbamoyladenine synthase</fullName>
        <shortName evidence="1">t(6)A synthase</shortName>
    </alternativeName>
    <alternativeName>
        <fullName evidence="1">t(6)A37 threonylcarbamoyladenosine biosynthesis protein TsaD</fullName>
    </alternativeName>
    <alternativeName>
        <fullName evidence="1">tRNA threonylcarbamoyladenosine biosynthesis protein TsaD</fullName>
    </alternativeName>
</protein>
<accession>B2SFD9</accession>
<evidence type="ECO:0000255" key="1">
    <source>
        <dbReference type="HAMAP-Rule" id="MF_01445"/>
    </source>
</evidence>
<proteinExistence type="inferred from homology"/>
<keyword id="KW-0012">Acyltransferase</keyword>
<keyword id="KW-0963">Cytoplasm</keyword>
<keyword id="KW-0408">Iron</keyword>
<keyword id="KW-0479">Metal-binding</keyword>
<keyword id="KW-0808">Transferase</keyword>
<keyword id="KW-0819">tRNA processing</keyword>
<dbReference type="EC" id="2.3.1.234" evidence="1"/>
<dbReference type="EMBL" id="CP000915">
    <property type="protein sequence ID" value="ACD30292.1"/>
    <property type="molecule type" value="Genomic_DNA"/>
</dbReference>
<dbReference type="SMR" id="B2SFD9"/>
<dbReference type="KEGG" id="ftm:FTM_0212"/>
<dbReference type="HOGENOM" id="CLU_023208_0_0_6"/>
<dbReference type="GO" id="GO:0005737">
    <property type="term" value="C:cytoplasm"/>
    <property type="evidence" value="ECO:0007669"/>
    <property type="project" value="UniProtKB-SubCell"/>
</dbReference>
<dbReference type="GO" id="GO:0005506">
    <property type="term" value="F:iron ion binding"/>
    <property type="evidence" value="ECO:0007669"/>
    <property type="project" value="UniProtKB-UniRule"/>
</dbReference>
<dbReference type="GO" id="GO:0061711">
    <property type="term" value="F:N(6)-L-threonylcarbamoyladenine synthase activity"/>
    <property type="evidence" value="ECO:0007669"/>
    <property type="project" value="UniProtKB-EC"/>
</dbReference>
<dbReference type="GO" id="GO:0002949">
    <property type="term" value="P:tRNA threonylcarbamoyladenosine modification"/>
    <property type="evidence" value="ECO:0007669"/>
    <property type="project" value="UniProtKB-UniRule"/>
</dbReference>
<dbReference type="CDD" id="cd24133">
    <property type="entry name" value="ASKHA_NBD_TsaD_bac"/>
    <property type="match status" value="1"/>
</dbReference>
<dbReference type="FunFam" id="3.30.420.40:FF:000012">
    <property type="entry name" value="tRNA N6-adenosine threonylcarbamoyltransferase"/>
    <property type="match status" value="1"/>
</dbReference>
<dbReference type="FunFam" id="3.30.420.40:FF:000040">
    <property type="entry name" value="tRNA N6-adenosine threonylcarbamoyltransferase"/>
    <property type="match status" value="1"/>
</dbReference>
<dbReference type="Gene3D" id="3.30.420.40">
    <property type="match status" value="2"/>
</dbReference>
<dbReference type="HAMAP" id="MF_01445">
    <property type="entry name" value="TsaD"/>
    <property type="match status" value="1"/>
</dbReference>
<dbReference type="InterPro" id="IPR043129">
    <property type="entry name" value="ATPase_NBD"/>
</dbReference>
<dbReference type="InterPro" id="IPR000905">
    <property type="entry name" value="Gcp-like_dom"/>
</dbReference>
<dbReference type="InterPro" id="IPR017861">
    <property type="entry name" value="KAE1/TsaD"/>
</dbReference>
<dbReference type="InterPro" id="IPR022450">
    <property type="entry name" value="TsaD"/>
</dbReference>
<dbReference type="NCBIfam" id="TIGR00329">
    <property type="entry name" value="gcp_kae1"/>
    <property type="match status" value="1"/>
</dbReference>
<dbReference type="NCBIfam" id="TIGR03723">
    <property type="entry name" value="T6A_TsaD_YgjD"/>
    <property type="match status" value="1"/>
</dbReference>
<dbReference type="PANTHER" id="PTHR11735">
    <property type="entry name" value="TRNA N6-ADENOSINE THREONYLCARBAMOYLTRANSFERASE"/>
    <property type="match status" value="1"/>
</dbReference>
<dbReference type="PANTHER" id="PTHR11735:SF6">
    <property type="entry name" value="TRNA N6-ADENOSINE THREONYLCARBAMOYLTRANSFERASE, MITOCHONDRIAL"/>
    <property type="match status" value="1"/>
</dbReference>
<dbReference type="Pfam" id="PF00814">
    <property type="entry name" value="TsaD"/>
    <property type="match status" value="1"/>
</dbReference>
<dbReference type="PRINTS" id="PR00789">
    <property type="entry name" value="OSIALOPTASE"/>
</dbReference>
<dbReference type="SUPFAM" id="SSF53067">
    <property type="entry name" value="Actin-like ATPase domain"/>
    <property type="match status" value="2"/>
</dbReference>
<comment type="function">
    <text evidence="1">Required for the formation of a threonylcarbamoyl group on adenosine at position 37 (t(6)A37) in tRNAs that read codons beginning with adenine. Is involved in the transfer of the threonylcarbamoyl moiety of threonylcarbamoyl-AMP (TC-AMP) to the N6 group of A37, together with TsaE and TsaB. TsaD likely plays a direct catalytic role in this reaction.</text>
</comment>
<comment type="catalytic activity">
    <reaction evidence="1">
        <text>L-threonylcarbamoyladenylate + adenosine(37) in tRNA = N(6)-L-threonylcarbamoyladenosine(37) in tRNA + AMP + H(+)</text>
        <dbReference type="Rhea" id="RHEA:37059"/>
        <dbReference type="Rhea" id="RHEA-COMP:10162"/>
        <dbReference type="Rhea" id="RHEA-COMP:10163"/>
        <dbReference type="ChEBI" id="CHEBI:15378"/>
        <dbReference type="ChEBI" id="CHEBI:73682"/>
        <dbReference type="ChEBI" id="CHEBI:74411"/>
        <dbReference type="ChEBI" id="CHEBI:74418"/>
        <dbReference type="ChEBI" id="CHEBI:456215"/>
        <dbReference type="EC" id="2.3.1.234"/>
    </reaction>
</comment>
<comment type="cofactor">
    <cofactor evidence="1">
        <name>Fe(2+)</name>
        <dbReference type="ChEBI" id="CHEBI:29033"/>
    </cofactor>
    <text evidence="1">Binds 1 Fe(2+) ion per subunit.</text>
</comment>
<comment type="subcellular location">
    <subcellularLocation>
        <location evidence="1">Cytoplasm</location>
    </subcellularLocation>
</comment>
<comment type="similarity">
    <text evidence="1">Belongs to the KAE1 / TsaD family.</text>
</comment>